<proteinExistence type="evidence at transcript level"/>
<accession>P56951</accession>
<keyword id="KW-0053">Apoptosis</keyword>
<keyword id="KW-0963">Cytoplasm</keyword>
<keyword id="KW-0479">Metal-binding</keyword>
<keyword id="KW-0539">Nucleus</keyword>
<keyword id="KW-0597">Phosphoprotein</keyword>
<keyword id="KW-1185">Reference proteome</keyword>
<keyword id="KW-0808">Transferase</keyword>
<keyword id="KW-0832">Ubl conjugation</keyword>
<keyword id="KW-0833">Ubl conjugation pathway</keyword>
<keyword id="KW-0862">Zinc</keyword>
<keyword id="KW-0863">Zinc-finger</keyword>
<sequence>MCNTNMSVSTDGAVSTSQIPASEQETLVRPKPLLLKLLKSVGAQKDTYTMKEVIFYLGQYIMTKRLYDEKQQHIVYCSNDLLGDLFGVPSFSVKEHRKIYTMIYRNLVVVSQQEPSDSGTSVSENRCHLEGGSNQKDLVQELQEEKPSSSDMVSRPSTSSRRRAVSETEENSDELPGERQRKRHKSDNISLSFDESLALCVIREICCERSSSSESTGTPSNPDLDAGVSEHSGDWLDQDSVSDQFSVEFEVESLDSEDYSLSEEGQELSDEDDEVYRVTVYQAGESDTDSFEEDPEISLADYWKCTSCNEMNPPLPPHCNRCWALRENWLPEDKGKDKGNMSEKAKLGDSMQEDEGFDVPDCKKSTVSDSRESCVEENDDKITQASLSQESEDYSQPSTSNSIIYSSQEDVKEFEREETQDKEESMESSFPLNAIEPCVICQGRPKNGCIVHGKTGHLMACFTCAKKLKKRNKPCPVCRQPIQMIVLTYFP</sequence>
<feature type="chain" id="PRO_0000157331" description="E3 ubiquitin-protein ligase Mdm2">
    <location>
        <begin position="1"/>
        <end position="491"/>
    </location>
</feature>
<feature type="domain" description="SWIB/MDM2" evidence="7">
    <location>
        <begin position="26"/>
        <end position="109"/>
    </location>
</feature>
<feature type="zinc finger region" description="RanBP2-type" evidence="6">
    <location>
        <begin position="299"/>
        <end position="328"/>
    </location>
</feature>
<feature type="zinc finger region" description="RING-type" evidence="5">
    <location>
        <begin position="438"/>
        <end position="479"/>
    </location>
</feature>
<feature type="region of interest" description="Necessary for interaction with USP2" evidence="1">
    <location>
        <begin position="1"/>
        <end position="110"/>
    </location>
</feature>
<feature type="region of interest" description="Sufficient to promote the mitochondrial pathway of apoptosis" evidence="3">
    <location>
        <begin position="1"/>
        <end position="101"/>
    </location>
</feature>
<feature type="region of interest" description="Disordered" evidence="8">
    <location>
        <begin position="1"/>
        <end position="21"/>
    </location>
</feature>
<feature type="region of interest" description="Disordered" evidence="8">
    <location>
        <begin position="142"/>
        <end position="187"/>
    </location>
</feature>
<feature type="region of interest" description="Interaction with PYHIN1 and necessary for interaction with RFFL and RNF34" evidence="3">
    <location>
        <begin position="150"/>
        <end position="230"/>
    </location>
</feature>
<feature type="region of interest" description="Interaction with MTBP" evidence="1">
    <location>
        <begin position="170"/>
        <end position="306"/>
    </location>
</feature>
<feature type="region of interest" description="ARF-binding">
    <location>
        <begin position="210"/>
        <end position="304"/>
    </location>
</feature>
<feature type="region of interest" description="Disordered" evidence="8">
    <location>
        <begin position="211"/>
        <end position="237"/>
    </location>
</feature>
<feature type="region of interest" description="Interaction with USP7" evidence="1">
    <location>
        <begin position="223"/>
        <end position="232"/>
    </location>
</feature>
<feature type="region of interest" description="Region II">
    <location>
        <begin position="242"/>
        <end position="331"/>
    </location>
</feature>
<feature type="region of interest" description="Disordered" evidence="8">
    <location>
        <begin position="253"/>
        <end position="275"/>
    </location>
</feature>
<feature type="region of interest" description="Necessary for interaction with USP2" evidence="1">
    <location>
        <begin position="276"/>
        <end position="491"/>
    </location>
</feature>
<feature type="region of interest" description="Disordered" evidence="8">
    <location>
        <begin position="333"/>
        <end position="402"/>
    </location>
</feature>
<feature type="region of interest" description="Disordered" evidence="8">
    <location>
        <begin position="409"/>
        <end position="428"/>
    </location>
</feature>
<feature type="short sequence motif" description="Nuclear localization signal" evidence="4">
    <location>
        <begin position="179"/>
        <end position="185"/>
    </location>
</feature>
<feature type="short sequence motif" description="Nuclear export signal">
    <location>
        <begin position="190"/>
        <end position="202"/>
    </location>
</feature>
<feature type="short sequence motif" description="Nucleolar localization signal" evidence="4">
    <location>
        <begin position="466"/>
        <end position="473"/>
    </location>
</feature>
<feature type="compositionally biased region" description="Polar residues" evidence="8">
    <location>
        <begin position="149"/>
        <end position="159"/>
    </location>
</feature>
<feature type="compositionally biased region" description="Acidic residues" evidence="8">
    <location>
        <begin position="253"/>
        <end position="274"/>
    </location>
</feature>
<feature type="compositionally biased region" description="Basic and acidic residues" evidence="8">
    <location>
        <begin position="333"/>
        <end position="347"/>
    </location>
</feature>
<feature type="compositionally biased region" description="Basic and acidic residues" evidence="8">
    <location>
        <begin position="360"/>
        <end position="374"/>
    </location>
</feature>
<feature type="compositionally biased region" description="Polar residues" evidence="8">
    <location>
        <begin position="383"/>
        <end position="402"/>
    </location>
</feature>
<feature type="compositionally biased region" description="Basic and acidic residues" evidence="8">
    <location>
        <begin position="409"/>
        <end position="425"/>
    </location>
</feature>
<feature type="binding site" evidence="3">
    <location>
        <position position="305"/>
    </location>
    <ligand>
        <name>Zn(2+)</name>
        <dbReference type="ChEBI" id="CHEBI:29105"/>
    </ligand>
</feature>
<feature type="binding site" evidence="3">
    <location>
        <position position="308"/>
    </location>
    <ligand>
        <name>Zn(2+)</name>
        <dbReference type="ChEBI" id="CHEBI:29105"/>
    </ligand>
</feature>
<feature type="binding site" evidence="3">
    <location>
        <position position="319"/>
    </location>
    <ligand>
        <name>Zn(2+)</name>
        <dbReference type="ChEBI" id="CHEBI:29105"/>
    </ligand>
</feature>
<feature type="binding site" evidence="3">
    <location>
        <position position="322"/>
    </location>
    <ligand>
        <name>Zn(2+)</name>
        <dbReference type="ChEBI" id="CHEBI:29105"/>
    </ligand>
</feature>
<feature type="modified residue" description="Phosphoserine; by SGK1" evidence="3">
    <location>
        <position position="166"/>
    </location>
</feature>
<feature type="modified residue" description="Phosphoserine" evidence="2">
    <location>
        <position position="190"/>
    </location>
</feature>
<feature type="modified residue" description="Phosphoserine" evidence="3">
    <location>
        <position position="240"/>
    </location>
</feature>
<feature type="modified residue" description="Phosphoserine" evidence="3">
    <location>
        <position position="242"/>
    </location>
</feature>
<feature type="modified residue" description="Phosphoserine" evidence="3">
    <location>
        <position position="246"/>
    </location>
</feature>
<feature type="modified residue" description="Phosphoserine" evidence="3">
    <location>
        <position position="260"/>
    </location>
</feature>
<feature type="modified residue" description="Phosphoserine" evidence="3">
    <location>
        <position position="262"/>
    </location>
</feature>
<feature type="modified residue" description="Phosphoserine; by ATM" evidence="3">
    <location>
        <position position="386"/>
    </location>
</feature>
<feature type="modified residue" description="Phosphoserine; by ATM" evidence="3">
    <location>
        <position position="395"/>
    </location>
</feature>
<feature type="modified residue" description="Phosphoserine; by ATM" evidence="3">
    <location>
        <position position="407"/>
    </location>
</feature>
<feature type="modified residue" description="Phosphothreonine; by ATM" evidence="3">
    <location>
        <position position="419"/>
    </location>
</feature>
<feature type="modified residue" description="Phosphoserine; by ATM" evidence="3">
    <location>
        <position position="425"/>
    </location>
</feature>
<feature type="modified residue" description="Phosphoserine; by ATM" evidence="3">
    <location>
        <position position="429"/>
    </location>
</feature>
<gene>
    <name type="primary">MDM2</name>
</gene>
<reference key="1">
    <citation type="journal article" date="2000" name="Cancer Lett.">
        <title>Cloning, sequence analysis and expression of the cDNAs encoding the canine and equine homologues of the mouse double minute 2 (mdm2) proto-oncogene.</title>
        <authorList>
            <person name="Nasir L."/>
            <person name="Burr P.D."/>
            <person name="McFarlane S.T."/>
            <person name="Gault E."/>
            <person name="Thompson H."/>
            <person name="Argyle D.J."/>
        </authorList>
    </citation>
    <scope>NUCLEOTIDE SEQUENCE [MRNA]</scope>
</reference>
<dbReference type="EC" id="2.3.2.27" evidence="2"/>
<dbReference type="EMBL" id="AF121140">
    <property type="protein sequence ID" value="AAF28866.1"/>
    <property type="molecule type" value="mRNA"/>
</dbReference>
<dbReference type="BMRB" id="P56951"/>
<dbReference type="SMR" id="P56951"/>
<dbReference type="FunCoup" id="P56951">
    <property type="interactions" value="2100"/>
</dbReference>
<dbReference type="STRING" id="9796.ENSECAP00000027954"/>
<dbReference type="InParanoid" id="P56951"/>
<dbReference type="Proteomes" id="UP000002281">
    <property type="component" value="Unplaced"/>
</dbReference>
<dbReference type="GO" id="GO:0005737">
    <property type="term" value="C:cytoplasm"/>
    <property type="evidence" value="ECO:0000250"/>
    <property type="project" value="UniProtKB"/>
</dbReference>
<dbReference type="GO" id="GO:0005730">
    <property type="term" value="C:nucleolus"/>
    <property type="evidence" value="ECO:0000250"/>
    <property type="project" value="UniProtKB"/>
</dbReference>
<dbReference type="GO" id="GO:0005654">
    <property type="term" value="C:nucleoplasm"/>
    <property type="evidence" value="ECO:0000250"/>
    <property type="project" value="UniProtKB"/>
</dbReference>
<dbReference type="GO" id="GO:0005634">
    <property type="term" value="C:nucleus"/>
    <property type="evidence" value="ECO:0000250"/>
    <property type="project" value="UniProtKB"/>
</dbReference>
<dbReference type="GO" id="GO:0008097">
    <property type="term" value="F:5S rRNA binding"/>
    <property type="evidence" value="ECO:0000250"/>
    <property type="project" value="UniProtKB"/>
</dbReference>
<dbReference type="GO" id="GO:0042802">
    <property type="term" value="F:identical protein binding"/>
    <property type="evidence" value="ECO:0007669"/>
    <property type="project" value="InterPro"/>
</dbReference>
<dbReference type="GO" id="GO:0043021">
    <property type="term" value="F:ribonucleoprotein complex binding"/>
    <property type="evidence" value="ECO:0000250"/>
    <property type="project" value="UniProtKB"/>
</dbReference>
<dbReference type="GO" id="GO:0043130">
    <property type="term" value="F:ubiquitin binding"/>
    <property type="evidence" value="ECO:0000250"/>
    <property type="project" value="UniProtKB"/>
</dbReference>
<dbReference type="GO" id="GO:0061630">
    <property type="term" value="F:ubiquitin protein ligase activity"/>
    <property type="evidence" value="ECO:0000318"/>
    <property type="project" value="GO_Central"/>
</dbReference>
<dbReference type="GO" id="GO:0008270">
    <property type="term" value="F:zinc ion binding"/>
    <property type="evidence" value="ECO:0007669"/>
    <property type="project" value="UniProtKB-KW"/>
</dbReference>
<dbReference type="GO" id="GO:0006915">
    <property type="term" value="P:apoptotic process"/>
    <property type="evidence" value="ECO:0000250"/>
    <property type="project" value="UniProtKB"/>
</dbReference>
<dbReference type="GO" id="GO:0043066">
    <property type="term" value="P:negative regulation of apoptotic process"/>
    <property type="evidence" value="ECO:0000318"/>
    <property type="project" value="GO_Central"/>
</dbReference>
<dbReference type="GO" id="GO:0045892">
    <property type="term" value="P:negative regulation of DNA-templated transcription"/>
    <property type="evidence" value="ECO:0000250"/>
    <property type="project" value="UniProtKB"/>
</dbReference>
<dbReference type="GO" id="GO:0000122">
    <property type="term" value="P:negative regulation of transcription by RNA polymerase II"/>
    <property type="evidence" value="ECO:0000250"/>
    <property type="project" value="UniProtKB"/>
</dbReference>
<dbReference type="GO" id="GO:0045931">
    <property type="term" value="P:positive regulation of mitotic cell cycle"/>
    <property type="evidence" value="ECO:0000318"/>
    <property type="project" value="GO_Central"/>
</dbReference>
<dbReference type="GO" id="GO:0016567">
    <property type="term" value="P:protein ubiquitination"/>
    <property type="evidence" value="ECO:0000250"/>
    <property type="project" value="UniProtKB"/>
</dbReference>
<dbReference type="GO" id="GO:0065008">
    <property type="term" value="P:regulation of biological quality"/>
    <property type="evidence" value="ECO:0007669"/>
    <property type="project" value="UniProtKB-ARBA"/>
</dbReference>
<dbReference type="GO" id="GO:0006511">
    <property type="term" value="P:ubiquitin-dependent protein catabolic process"/>
    <property type="evidence" value="ECO:0000318"/>
    <property type="project" value="GO_Central"/>
</dbReference>
<dbReference type="CDD" id="cd17672">
    <property type="entry name" value="MDM2"/>
    <property type="match status" value="1"/>
</dbReference>
<dbReference type="CDD" id="cd16783">
    <property type="entry name" value="mRING-HC-C2H2C4_MDM2"/>
    <property type="match status" value="1"/>
</dbReference>
<dbReference type="FunFam" id="1.10.245.10:FF:000002">
    <property type="entry name" value="E3 ubiquitin-protein ligase Mdm2"/>
    <property type="match status" value="1"/>
</dbReference>
<dbReference type="FunFam" id="2.30.30.380:FF:000005">
    <property type="entry name" value="E3 ubiquitin-protein ligase Mdm2"/>
    <property type="match status" value="1"/>
</dbReference>
<dbReference type="FunFam" id="3.30.40.10:FF:000076">
    <property type="entry name" value="E3 ubiquitin-protein ligase Mdm2"/>
    <property type="match status" value="1"/>
</dbReference>
<dbReference type="Gene3D" id="1.10.245.10">
    <property type="entry name" value="SWIB/MDM2 domain"/>
    <property type="match status" value="1"/>
</dbReference>
<dbReference type="Gene3D" id="3.30.40.10">
    <property type="entry name" value="Zinc/RING finger domain, C3HC4 (zinc finger)"/>
    <property type="match status" value="1"/>
</dbReference>
<dbReference type="Gene3D" id="2.30.30.380">
    <property type="entry name" value="Zn-finger domain of Sec23/24"/>
    <property type="match status" value="1"/>
</dbReference>
<dbReference type="InterPro" id="IPR028340">
    <property type="entry name" value="Mdm2"/>
</dbReference>
<dbReference type="InterPro" id="IPR044080">
    <property type="entry name" value="MDM2_mRING-HC-C2H2C4"/>
</dbReference>
<dbReference type="InterPro" id="IPR016495">
    <property type="entry name" value="p53_neg-reg_MDM_2/4"/>
</dbReference>
<dbReference type="InterPro" id="IPR036885">
    <property type="entry name" value="SWIB_MDM2_dom_sf"/>
</dbReference>
<dbReference type="InterPro" id="IPR003121">
    <property type="entry name" value="SWIB_MDM2_domain"/>
</dbReference>
<dbReference type="InterPro" id="IPR001876">
    <property type="entry name" value="Znf_RanBP2"/>
</dbReference>
<dbReference type="InterPro" id="IPR036443">
    <property type="entry name" value="Znf_RanBP2_sf"/>
</dbReference>
<dbReference type="InterPro" id="IPR001841">
    <property type="entry name" value="Znf_RING"/>
</dbReference>
<dbReference type="InterPro" id="IPR013083">
    <property type="entry name" value="Znf_RING/FYVE/PHD"/>
</dbReference>
<dbReference type="PANTHER" id="PTHR46858:SF13">
    <property type="entry name" value="E3 UBIQUITIN-PROTEIN LIGASE MDM2"/>
    <property type="match status" value="1"/>
</dbReference>
<dbReference type="PANTHER" id="PTHR46858">
    <property type="entry name" value="OS05G0521000 PROTEIN"/>
    <property type="match status" value="1"/>
</dbReference>
<dbReference type="Pfam" id="PF02201">
    <property type="entry name" value="SWIB"/>
    <property type="match status" value="1"/>
</dbReference>
<dbReference type="Pfam" id="PF13920">
    <property type="entry name" value="zf-C3HC4_3"/>
    <property type="match status" value="1"/>
</dbReference>
<dbReference type="Pfam" id="PF00641">
    <property type="entry name" value="Zn_ribbon_RanBP"/>
    <property type="match status" value="1"/>
</dbReference>
<dbReference type="PIRSF" id="PIRSF500700">
    <property type="entry name" value="MDM2"/>
    <property type="match status" value="1"/>
</dbReference>
<dbReference type="PIRSF" id="PIRSF006748">
    <property type="entry name" value="p53_MDM_2/4"/>
    <property type="match status" value="1"/>
</dbReference>
<dbReference type="SUPFAM" id="SSF90209">
    <property type="entry name" value="Ran binding protein zinc finger-like"/>
    <property type="match status" value="1"/>
</dbReference>
<dbReference type="SUPFAM" id="SSF57850">
    <property type="entry name" value="RING/U-box"/>
    <property type="match status" value="1"/>
</dbReference>
<dbReference type="SUPFAM" id="SSF47592">
    <property type="entry name" value="SWIB/MDM2 domain"/>
    <property type="match status" value="2"/>
</dbReference>
<dbReference type="PROSITE" id="PS51925">
    <property type="entry name" value="SWIB_MDM2"/>
    <property type="match status" value="1"/>
</dbReference>
<dbReference type="PROSITE" id="PS01358">
    <property type="entry name" value="ZF_RANBP2_1"/>
    <property type="match status" value="1"/>
</dbReference>
<dbReference type="PROSITE" id="PS50199">
    <property type="entry name" value="ZF_RANBP2_2"/>
    <property type="match status" value="1"/>
</dbReference>
<dbReference type="PROSITE" id="PS50089">
    <property type="entry name" value="ZF_RING_2"/>
    <property type="match status" value="1"/>
</dbReference>
<organism>
    <name type="scientific">Equus caballus</name>
    <name type="common">Horse</name>
    <dbReference type="NCBI Taxonomy" id="9796"/>
    <lineage>
        <taxon>Eukaryota</taxon>
        <taxon>Metazoa</taxon>
        <taxon>Chordata</taxon>
        <taxon>Craniata</taxon>
        <taxon>Vertebrata</taxon>
        <taxon>Euteleostomi</taxon>
        <taxon>Mammalia</taxon>
        <taxon>Eutheria</taxon>
        <taxon>Laurasiatheria</taxon>
        <taxon>Perissodactyla</taxon>
        <taxon>Equidae</taxon>
        <taxon>Equus</taxon>
    </lineage>
</organism>
<protein>
    <recommendedName>
        <fullName>E3 ubiquitin-protein ligase Mdm2</fullName>
        <ecNumber evidence="2">2.3.2.27</ecNumber>
    </recommendedName>
    <alternativeName>
        <fullName>Double minute 2 protein</fullName>
        <shortName>Edm2</shortName>
    </alternativeName>
    <alternativeName>
        <fullName evidence="9">RING-type E3 ubiquitin transferase Mdm2</fullName>
    </alternativeName>
    <alternativeName>
        <fullName>p53-binding protein Mdm2</fullName>
    </alternativeName>
</protein>
<name>MDM2_HORSE</name>
<evidence type="ECO:0000250" key="1"/>
<evidence type="ECO:0000250" key="2">
    <source>
        <dbReference type="UniProtKB" id="P23804"/>
    </source>
</evidence>
<evidence type="ECO:0000250" key="3">
    <source>
        <dbReference type="UniProtKB" id="Q00987"/>
    </source>
</evidence>
<evidence type="ECO:0000255" key="4"/>
<evidence type="ECO:0000255" key="5">
    <source>
        <dbReference type="PROSITE-ProRule" id="PRU00175"/>
    </source>
</evidence>
<evidence type="ECO:0000255" key="6">
    <source>
        <dbReference type="PROSITE-ProRule" id="PRU00322"/>
    </source>
</evidence>
<evidence type="ECO:0000255" key="7">
    <source>
        <dbReference type="PROSITE-ProRule" id="PRU01273"/>
    </source>
</evidence>
<evidence type="ECO:0000256" key="8">
    <source>
        <dbReference type="SAM" id="MobiDB-lite"/>
    </source>
</evidence>
<evidence type="ECO:0000305" key="9"/>
<comment type="function">
    <text evidence="2 3">E3 ubiquitin-protein ligase that mediates ubiquitination of p53/TP53, leading to its degradation by the proteasome. Inhibits p53/TP53- and p73/TP73-mediated cell cycle arrest and apoptosis by binding its transcriptional activation domain. Also acts as a ubiquitin ligase E3 toward itself and ARRB1. Permits the nuclear export of p53/TP53. Promotes proteasome-dependent ubiquitin-independent degradation of retinoblastoma RB1 protein. Inhibits DAXX-mediated apoptosis by inducing its ubiquitination and degradation. Component of the TRIM28/KAP1-MDM2-p53/TP53 complex involved in stabilizing p53/TP53. Also a component of the TRIM28/KAP1-ERBB4-MDM2 complex which links growth factor and DNA damage response pathways. Mediates ubiquitination and subsequent proteasome degradation of DYRK2 in nucleus. Ubiquitinates IGF1R and SNAI1 and promotes them to proteasomal degradation. Ubiquitinates DCX, leading to DCX degradation and reduction of the dendritic spine density of olfactory bulb granule cells. Ubiquitinates DLG4, leading to proteasomal degradation of DLG4 which is required for AMPA receptor endocytosis (By similarity). Negatively regulates NDUFS1, leading to decreased mitochondrial respiration, marked oxidative stress, and commitment to the mitochondrial pathway of apoptosis (By similarity). Binds NDUFS1 leading to its cytosolic retention rather than mitochondrial localization resulting in decreased supercomplex assembly (interactions between complex I and complex III), decreased complex I activity, ROS production, and apoptosis (By similarity).</text>
</comment>
<comment type="catalytic activity">
    <reaction evidence="2">
        <text>S-ubiquitinyl-[E2 ubiquitin-conjugating enzyme]-L-cysteine + [acceptor protein]-L-lysine = [E2 ubiquitin-conjugating enzyme]-L-cysteine + N(6)-ubiquitinyl-[acceptor protein]-L-lysine.</text>
        <dbReference type="EC" id="2.3.2.27"/>
    </reaction>
</comment>
<comment type="subunit">
    <text evidence="2 3">Interacts with p53/TP53, TP73/p73, RBL5 and RP11. Binds specifically to RNA. Can interact with RB1, E1A-associated protein EP300 and the E2F1 transcription factor. Forms a ternary complex with p53/TP53 and WWOX. Interacts with CDKN2AIP, RFWD3, USP7, PYHIN1 and RBBP6. Interacts with ARRB1 and ARRB2. Interacts with PSMA3. Found in a trimeric complex with MDM2, MDM4 and USP2. Interacts with USP2 (via N-terminus and C-terminus). Interacts with MDM4. Part of a complex with MDM2, DAXX, RASSF1 and USP7. Part of a complex with DAXX, MDM2 and USP7. Interacts directly with DAXX and USP7. Interacts (via C-terminus) with RASSF1 isoform A (via N-terminus); the interaction is independent of TP53. Interacts with APEX1; leading to its ubiquitination and degradation. Interacts with RYBP; this inhibits ubiquitination of TP53. Identified in a complex with RYBP and p53/TP53. Also a component of the TRIM28/KAP1-MDM2-p53/TP53 complex involved in regulating p53/TP53 stabilization and activity. Binds directly both p53/TP53 and TRIM28. Component of the TRIM28/KAP1-ERBB4-MDM2 complex involved in connecting growth factor responses with DNA damage. Interacts directly with both TRIM28 and ERBB4 in the complex. Interacts with DYRK2. Interacts with IGF1R. Interacts with TRIM13; the interaction ubiquitinates MDM2 leading to its proteasomal degradation. Interacts with SNAI1; this interaction promotes SNAI1 ubiquitination. Interacts with NOTCH1 (via intracellular domain). Interacts with FHIT. Interacts with RFFL and RNF34; the interaction stabilizes MDM2. Interacts with CDK5RAP3 and CDKN2A/ARF; form a ternary complex involved in regulation of p53/TP53. Interacts with MTA1. Interacts with AARB2. Interacts with MTBP. Interacts with PML. Interacts with TBRG1. Interacts (via its RanBP2-type zinc finger domain) with RPL11 in the 5S RNP complex composed of 5S RNA, RPL5 and RPL11; this interaction occurs in the nucleoplasm and negatively regulates MDM2-mediated TP53 ubiquitination and degradation (By similarity). Interacts with ADGRB1; the interaction results in inhibition of MDM2-mediated ubiquitination and degradation of DLG4/PSD95, promoting DLG4 stability and regulating synaptic plasticity. Interacts with RPL23A; this interaction may promote p53/TP53 polyubiquitination (By similarity). Interacts with NDUFS1 (By similarity). Interacts with MORN3; the interaction enhances the ubiquitination of p53/TP53 (By similarity).</text>
</comment>
<comment type="subcellular location">
    <subcellularLocation>
        <location evidence="2">Nucleus</location>
        <location evidence="2">Nucleoplasm</location>
    </subcellularLocation>
    <subcellularLocation>
        <location evidence="2">Cytoplasm</location>
    </subcellularLocation>
    <subcellularLocation>
        <location evidence="2">Nucleus</location>
        <location evidence="2">Nucleolus</location>
    </subcellularLocation>
    <subcellularLocation>
        <location evidence="3">Nucleus</location>
    </subcellularLocation>
    <text evidence="2 3">Expressed predominantly in the nucleoplasm. Interaction with ARF(P14) results in the localization of both proteins to the nucleolus. The nucleolar localization signals in both ARF(P14) and MDM2 may be necessary to allow efficient nucleolar localization of both proteins. Colocalizes with RASSF1 isoform A in the nucleus (By similarity).</text>
</comment>
<comment type="domain">
    <text evidence="1">Region I is sufficient for binding p53 and inhibiting its G1 arrest and apoptosis functions. It also binds p73 and E2F1. Region II contains most of a central acidic region required for interaction with ribosomal protein L5 and a putative C4-type zinc finger. The RING finger domain which coordinates two molecules of zinc interacts specifically with RNA whether or not zinc is present and mediates the heterooligomerization with MDM4. It is also essential for its ubiquitin ligase E3 activity toward p53 and itself (By similarity).</text>
</comment>
<comment type="PTM">
    <text evidence="1">Phosphorylation on Ser-166 by SGK1 activates ubiquitination of p53/TP53. Phosphorylated at multiple sites near the RING domain by ATM upon DNA damage; this promotes its ubiquitination and degradation, preventing p53/TP53 degradation (By similarity).</text>
</comment>
<comment type="PTM">
    <text evidence="3">Autoubiquitination leads to proteasomal degradation; resulting in p53/TP53 activation it may be regulated by SFN. Also ubiquitinated by TRIM13. ATM-phosphorylated MDM2 is ubiquitinated by the SCF(FBXO31) complex in response to genotoxic stress, promoting its degradation and p53/TP53-mediated DNA damage response. Deubiquitinated by USP2 leads to its accumulation and increases deubiquitination and degradation of p53/TP53. Deubiquitinated by USP7 leading to its stabilization.</text>
</comment>
<comment type="similarity">
    <text evidence="9">Belongs to the MDM2/MDM4 family.</text>
</comment>